<dbReference type="EC" id="2.4.1.182" evidence="1"/>
<dbReference type="EMBL" id="CP000847">
    <property type="protein sequence ID" value="ABV74777.1"/>
    <property type="molecule type" value="Genomic_DNA"/>
</dbReference>
<dbReference type="RefSeq" id="WP_012149411.1">
    <property type="nucleotide sequence ID" value="NC_009881.1"/>
</dbReference>
<dbReference type="SMR" id="A8GN02"/>
<dbReference type="STRING" id="293614.A1C_02380"/>
<dbReference type="CAZy" id="GT19">
    <property type="family name" value="Glycosyltransferase Family 19"/>
</dbReference>
<dbReference type="KEGG" id="rak:A1C_02380"/>
<dbReference type="eggNOG" id="COG0763">
    <property type="taxonomic scope" value="Bacteria"/>
</dbReference>
<dbReference type="HOGENOM" id="CLU_036577_2_0_5"/>
<dbReference type="UniPathway" id="UPA00973"/>
<dbReference type="Proteomes" id="UP000006830">
    <property type="component" value="Chromosome"/>
</dbReference>
<dbReference type="GO" id="GO:0016020">
    <property type="term" value="C:membrane"/>
    <property type="evidence" value="ECO:0007669"/>
    <property type="project" value="GOC"/>
</dbReference>
<dbReference type="GO" id="GO:0008915">
    <property type="term" value="F:lipid-A-disaccharide synthase activity"/>
    <property type="evidence" value="ECO:0007669"/>
    <property type="project" value="UniProtKB-UniRule"/>
</dbReference>
<dbReference type="GO" id="GO:0005543">
    <property type="term" value="F:phospholipid binding"/>
    <property type="evidence" value="ECO:0007669"/>
    <property type="project" value="TreeGrafter"/>
</dbReference>
<dbReference type="GO" id="GO:0009245">
    <property type="term" value="P:lipid A biosynthetic process"/>
    <property type="evidence" value="ECO:0007669"/>
    <property type="project" value="UniProtKB-UniRule"/>
</dbReference>
<dbReference type="HAMAP" id="MF_00392">
    <property type="entry name" value="LpxB"/>
    <property type="match status" value="1"/>
</dbReference>
<dbReference type="InterPro" id="IPR003835">
    <property type="entry name" value="Glyco_trans_19"/>
</dbReference>
<dbReference type="NCBIfam" id="TIGR00215">
    <property type="entry name" value="lpxB"/>
    <property type="match status" value="1"/>
</dbReference>
<dbReference type="PANTHER" id="PTHR30372">
    <property type="entry name" value="LIPID-A-DISACCHARIDE SYNTHASE"/>
    <property type="match status" value="1"/>
</dbReference>
<dbReference type="PANTHER" id="PTHR30372:SF4">
    <property type="entry name" value="LIPID-A-DISACCHARIDE SYNTHASE, MITOCHONDRIAL-RELATED"/>
    <property type="match status" value="1"/>
</dbReference>
<dbReference type="Pfam" id="PF02684">
    <property type="entry name" value="LpxB"/>
    <property type="match status" value="1"/>
</dbReference>
<dbReference type="SUPFAM" id="SSF53756">
    <property type="entry name" value="UDP-Glycosyltransferase/glycogen phosphorylase"/>
    <property type="match status" value="1"/>
</dbReference>
<evidence type="ECO:0000255" key="1">
    <source>
        <dbReference type="HAMAP-Rule" id="MF_00392"/>
    </source>
</evidence>
<accession>A8GN02</accession>
<keyword id="KW-0328">Glycosyltransferase</keyword>
<keyword id="KW-0441">Lipid A biosynthesis</keyword>
<keyword id="KW-0444">Lipid biosynthesis</keyword>
<keyword id="KW-0443">Lipid metabolism</keyword>
<keyword id="KW-0808">Transferase</keyword>
<comment type="function">
    <text evidence="1">Condensation of UDP-2,3-diacylglucosamine and 2,3-diacylglucosamine-1-phosphate to form lipid A disaccharide, a precursor of lipid A, a phosphorylated glycolipid that anchors the lipopolysaccharide to the outer membrane of the cell.</text>
</comment>
<comment type="catalytic activity">
    <reaction evidence="1">
        <text>a lipid X + a UDP-2-N,3-O-bis[(3R)-3-hydroxyacyl]-alpha-D-glucosamine = a lipid A disaccharide + UDP + H(+)</text>
        <dbReference type="Rhea" id="RHEA:67828"/>
        <dbReference type="ChEBI" id="CHEBI:15378"/>
        <dbReference type="ChEBI" id="CHEBI:58223"/>
        <dbReference type="ChEBI" id="CHEBI:137748"/>
        <dbReference type="ChEBI" id="CHEBI:176338"/>
        <dbReference type="ChEBI" id="CHEBI:176343"/>
        <dbReference type="EC" id="2.4.1.182"/>
    </reaction>
</comment>
<comment type="pathway">
    <text evidence="1">Bacterial outer membrane biogenesis; LPS lipid A biosynthesis.</text>
</comment>
<comment type="similarity">
    <text evidence="1">Belongs to the LpxB family.</text>
</comment>
<name>LPXB_RICAH</name>
<proteinExistence type="inferred from homology"/>
<sequence length="391" mass="44141">MTKVYFIAGETSGDFIGGRIIQNLKSNKGVEFTGIGGKCMEEAGNFKSLFPITCINLMGFVEILPHIFNLKKLIDKTVQDIINSQADLLITIDSPGFTYRVAKQLRKLLPKLKMIHIVAPSVWAYKDGRAVKYAKIYDCLFALLPFEPPYFTKVGLDCRYIGHPIMEQEFYSDKIALREEFKIDKNERVLCVTLGSRQGEIRKHLPVFISSIEEIFKSCNNLKVIFTLANPAHEAIIKPFLEDVQFHYLFSSARLKAYAVADAALAKSGTNTLEIVASGTPMVVAYQVNLISFFIIRLLIKIKYVTLINIIAGSEIIPEFIQFNCRASLISNTLQELLFNSKKAYKQVIESQKILQTLGLKSNRSPSYIAAEIIKQEFLESKIKLLKENST</sequence>
<protein>
    <recommendedName>
        <fullName evidence="1">Lipid-A-disaccharide synthase</fullName>
        <ecNumber evidence="1">2.4.1.182</ecNumber>
    </recommendedName>
</protein>
<organism>
    <name type="scientific">Rickettsia akari (strain Hartford)</name>
    <dbReference type="NCBI Taxonomy" id="293614"/>
    <lineage>
        <taxon>Bacteria</taxon>
        <taxon>Pseudomonadati</taxon>
        <taxon>Pseudomonadota</taxon>
        <taxon>Alphaproteobacteria</taxon>
        <taxon>Rickettsiales</taxon>
        <taxon>Rickettsiaceae</taxon>
        <taxon>Rickettsieae</taxon>
        <taxon>Rickettsia</taxon>
        <taxon>spotted fever group</taxon>
    </lineage>
</organism>
<reference key="1">
    <citation type="submission" date="2007-09" db="EMBL/GenBank/DDBJ databases">
        <title>Complete genome sequence of Rickettsia akari.</title>
        <authorList>
            <person name="Madan A."/>
            <person name="Fahey J."/>
            <person name="Helton E."/>
            <person name="Ketteman M."/>
            <person name="Madan A."/>
            <person name="Rodrigues S."/>
            <person name="Sanchez A."/>
            <person name="Whiting M."/>
            <person name="Dasch G."/>
            <person name="Eremeeva M."/>
        </authorList>
    </citation>
    <scope>NUCLEOTIDE SEQUENCE [LARGE SCALE GENOMIC DNA]</scope>
    <source>
        <strain>Hartford</strain>
    </source>
</reference>
<feature type="chain" id="PRO_1000049411" description="Lipid-A-disaccharide synthase">
    <location>
        <begin position="1"/>
        <end position="391"/>
    </location>
</feature>
<gene>
    <name evidence="1" type="primary">lpxB</name>
    <name type="ordered locus">A1C_02380</name>
</gene>